<protein>
    <recommendedName>
        <fullName>Transcriptional activator BRRF1</fullName>
    </recommendedName>
</protein>
<gene>
    <name type="ORF">BRRF1</name>
</gene>
<reference key="1">
    <citation type="journal article" date="1984" name="Nature">
        <title>DNA sequence and expression of the B95-8 Epstein-Barr virus genome.</title>
        <authorList>
            <person name="Baer R."/>
            <person name="Bankier A.T."/>
            <person name="Biggin M.D."/>
            <person name="Deininger P.L."/>
            <person name="Farrell P.J."/>
            <person name="Gibson T.J."/>
            <person name="Hatfull G."/>
            <person name="Hudson G.S."/>
            <person name="Satchwell S.C."/>
            <person name="Seguin C."/>
            <person name="Tuffnell P.S."/>
            <person name="Barrell B.G."/>
        </authorList>
    </citation>
    <scope>NUCLEOTIDE SEQUENCE [LARGE SCALE GENOMIC DNA]</scope>
</reference>
<reference key="2">
    <citation type="journal article" date="2003" name="Virology">
        <title>Updated Epstein-Barr virus (EBV) DNA sequence and analysis of a promoter for the BART (CST, BARF0) RNAs of EBV.</title>
        <authorList>
            <person name="de Jesus O."/>
            <person name="Smith P.R."/>
            <person name="Spender L.C."/>
            <person name="Elgueta Karstegl C."/>
            <person name="Niller H.H."/>
            <person name="Huang D."/>
            <person name="Farrell P.J."/>
        </authorList>
    </citation>
    <scope>GENOME REANNOTATION</scope>
</reference>
<reference key="3">
    <citation type="journal article" date="2004" name="J. Virol.">
        <title>The BRRF1 early gene of Epstein-Barr virus encodes a transcription factor that enhances induction of lytic infection by BRLF1.</title>
        <authorList>
            <person name="Hong G.K."/>
            <person name="Delecluse H.J."/>
            <person name="Gruffat H."/>
            <person name="Morrison T.E."/>
            <person name="Feng W.H."/>
            <person name="Sergeant A."/>
            <person name="Kenney S.C."/>
        </authorList>
    </citation>
    <scope>FUNCTION</scope>
</reference>
<sequence length="310" mass="35319">MASSNRGNARPLKSFLHELYLKHYPEVGDVVHLLNTIGVDCDLPPSHPLLTAQRGLFLARVLQAVQQHKLLEDTIVPKILKKLAYFLELLSYYSPKDEQRDIAEVLDHLKTNRDLGLDDRLWALIRKLRQDRHHASVNVLMPGSDYTAVSLQYYDGISIGMRKVIADVCRSGYASMPSMTATHNLSHQLLMASGPSEEPCAWRGFFNQVLLWTVALCKFRRCIYYNYIQGSIATISQLLHLEIKALCSWIISQDGMRLFQHSRPLLTLWESVAANQEVTDAITLPDCAEYIDLLKHTKHVLENCSAMQYK</sequence>
<name>BRRF1_EBVB9</name>
<feature type="chain" id="PRO_0000116258" description="Transcriptional activator BRRF1">
    <location>
        <begin position="1"/>
        <end position="310"/>
    </location>
</feature>
<organismHost>
    <name type="scientific">Homo sapiens</name>
    <name type="common">Human</name>
    <dbReference type="NCBI Taxonomy" id="9606"/>
</organismHost>
<comment type="function">
    <text evidence="1">Enhances the ability of BRLF1 to induce lytic infection by cooperating with it to transcriptionally activate the BZLF1 promoter.</text>
</comment>
<comment type="similarity">
    <text evidence="2">Belongs to the lymphocryptovirus BBRF1 family.</text>
</comment>
<dbReference type="EMBL" id="V01555">
    <property type="protein sequence ID" value="CAA24813.1"/>
    <property type="molecule type" value="Genomic_DNA"/>
</dbReference>
<dbReference type="EMBL" id="AJ507799">
    <property type="protein sequence ID" value="CAD53425.1"/>
    <property type="molecule type" value="Genomic_DNA"/>
</dbReference>
<dbReference type="PIR" id="H43042">
    <property type="entry name" value="QQBE28"/>
</dbReference>
<dbReference type="RefSeq" id="YP_401675.1">
    <property type="nucleotide sequence ID" value="NC_007605.1"/>
</dbReference>
<dbReference type="SMR" id="P03207"/>
<dbReference type="BioGRID" id="971770">
    <property type="interactions" value="2"/>
</dbReference>
<dbReference type="IntAct" id="P03207">
    <property type="interactions" value="3"/>
</dbReference>
<dbReference type="MINT" id="P03207"/>
<dbReference type="DNASU" id="3783728"/>
<dbReference type="GeneID" id="3783728"/>
<dbReference type="KEGG" id="vg:3783728"/>
<dbReference type="Proteomes" id="UP000153037">
    <property type="component" value="Segment"/>
</dbReference>
<dbReference type="GO" id="GO:0019046">
    <property type="term" value="P:release from viral latency"/>
    <property type="evidence" value="ECO:0000315"/>
    <property type="project" value="CACAO"/>
</dbReference>
<dbReference type="InterPro" id="IPR006878">
    <property type="entry name" value="Herpes_BBRF1"/>
</dbReference>
<dbReference type="Pfam" id="PF04793">
    <property type="entry name" value="Herpes_BBRF1"/>
    <property type="match status" value="1"/>
</dbReference>
<proteinExistence type="inferred from homology"/>
<accession>P03207</accession>
<accession>Q777E3</accession>
<keyword id="KW-0244">Early protein</keyword>
<keyword id="KW-1185">Reference proteome</keyword>
<keyword id="KW-0804">Transcription</keyword>
<keyword id="KW-0805">Transcription regulation</keyword>
<evidence type="ECO:0000269" key="1">
    <source>
    </source>
</evidence>
<evidence type="ECO:0000305" key="2"/>
<organism>
    <name type="scientific">Epstein-Barr virus (strain B95-8)</name>
    <name type="common">HHV-4</name>
    <name type="synonym">Human herpesvirus 4</name>
    <dbReference type="NCBI Taxonomy" id="10377"/>
    <lineage>
        <taxon>Viruses</taxon>
        <taxon>Duplodnaviria</taxon>
        <taxon>Heunggongvirae</taxon>
        <taxon>Peploviricota</taxon>
        <taxon>Herviviricetes</taxon>
        <taxon>Herpesvirales</taxon>
        <taxon>Orthoherpesviridae</taxon>
        <taxon>Gammaherpesvirinae</taxon>
        <taxon>Lymphocryptovirus</taxon>
        <taxon>Lymphocryptovirus humangamma4</taxon>
        <taxon>Epstein-Barr virus (strain GD1)</taxon>
    </lineage>
</organism>